<name>RECX_LISMF</name>
<sequence>MKITSISVQQKNKERYNIFIDEKYNFSVDEEVLARYQLMKGKVLTEAEIEEIKQADMVRKGLNKAINFLSHRVRSEKEIRDYLRKQEMEAFAIDEILKKLADMDYINDLEFAELYTKTQIKTTLKGPRTIERELVEKGLTREIITQVIEEYSDEAQLENATKQAIKIMKRNNKSAKKMLQQKIITDLIQKGYTSELAKVAATEATSELDVADEAEILQKQIEKTMRKNKRYKPSIAKQKTITSLMQKGFSYDTIQSYLTENEISFEEEE</sequence>
<evidence type="ECO:0000255" key="1">
    <source>
        <dbReference type="HAMAP-Rule" id="MF_01114"/>
    </source>
</evidence>
<feature type="chain" id="PRO_0000162445" description="Regulatory protein RecX">
    <location>
        <begin position="1"/>
        <end position="269"/>
    </location>
</feature>
<organism>
    <name type="scientific">Listeria monocytogenes serotype 4b (strain F2365)</name>
    <dbReference type="NCBI Taxonomy" id="265669"/>
    <lineage>
        <taxon>Bacteria</taxon>
        <taxon>Bacillati</taxon>
        <taxon>Bacillota</taxon>
        <taxon>Bacilli</taxon>
        <taxon>Bacillales</taxon>
        <taxon>Listeriaceae</taxon>
        <taxon>Listeria</taxon>
    </lineage>
</organism>
<dbReference type="EMBL" id="AE017262">
    <property type="protein sequence ID" value="AAT04490.1"/>
    <property type="molecule type" value="Genomic_DNA"/>
</dbReference>
<dbReference type="RefSeq" id="WP_003726282.1">
    <property type="nucleotide sequence ID" value="NC_002973.6"/>
</dbReference>
<dbReference type="SMR" id="Q71YX4"/>
<dbReference type="KEGG" id="lmf:LMOf2365_1717"/>
<dbReference type="HOGENOM" id="CLU_066607_4_0_9"/>
<dbReference type="GO" id="GO:0005737">
    <property type="term" value="C:cytoplasm"/>
    <property type="evidence" value="ECO:0007669"/>
    <property type="project" value="UniProtKB-SubCell"/>
</dbReference>
<dbReference type="GO" id="GO:0006282">
    <property type="term" value="P:regulation of DNA repair"/>
    <property type="evidence" value="ECO:0007669"/>
    <property type="project" value="UniProtKB-UniRule"/>
</dbReference>
<dbReference type="Gene3D" id="1.10.10.10">
    <property type="entry name" value="Winged helix-like DNA-binding domain superfamily/Winged helix DNA-binding domain"/>
    <property type="match status" value="4"/>
</dbReference>
<dbReference type="HAMAP" id="MF_01114">
    <property type="entry name" value="RecX"/>
    <property type="match status" value="1"/>
</dbReference>
<dbReference type="InterPro" id="IPR053926">
    <property type="entry name" value="RecX_HTH_1st"/>
</dbReference>
<dbReference type="InterPro" id="IPR053924">
    <property type="entry name" value="RecX_HTH_2nd"/>
</dbReference>
<dbReference type="InterPro" id="IPR053925">
    <property type="entry name" value="RecX_HTH_3rd"/>
</dbReference>
<dbReference type="InterPro" id="IPR003783">
    <property type="entry name" value="Regulatory_RecX"/>
</dbReference>
<dbReference type="InterPro" id="IPR036388">
    <property type="entry name" value="WH-like_DNA-bd_sf"/>
</dbReference>
<dbReference type="NCBIfam" id="NF010733">
    <property type="entry name" value="PRK14135.1"/>
    <property type="match status" value="1"/>
</dbReference>
<dbReference type="PANTHER" id="PTHR33602">
    <property type="entry name" value="REGULATORY PROTEIN RECX FAMILY PROTEIN"/>
    <property type="match status" value="1"/>
</dbReference>
<dbReference type="PANTHER" id="PTHR33602:SF1">
    <property type="entry name" value="REGULATORY PROTEIN RECX FAMILY PROTEIN"/>
    <property type="match status" value="1"/>
</dbReference>
<dbReference type="Pfam" id="PF21982">
    <property type="entry name" value="RecX_HTH1"/>
    <property type="match status" value="1"/>
</dbReference>
<dbReference type="Pfam" id="PF02631">
    <property type="entry name" value="RecX_HTH2"/>
    <property type="match status" value="1"/>
</dbReference>
<dbReference type="Pfam" id="PF21981">
    <property type="entry name" value="RecX_HTH3"/>
    <property type="match status" value="1"/>
</dbReference>
<comment type="function">
    <text evidence="1">Modulates RecA activity.</text>
</comment>
<comment type="subcellular location">
    <subcellularLocation>
        <location evidence="1">Cytoplasm</location>
    </subcellularLocation>
</comment>
<comment type="similarity">
    <text evidence="1">Belongs to the RecX family.</text>
</comment>
<reference key="1">
    <citation type="journal article" date="2004" name="Nucleic Acids Res.">
        <title>Whole genome comparisons of serotype 4b and 1/2a strains of the food-borne pathogen Listeria monocytogenes reveal new insights into the core genome components of this species.</title>
        <authorList>
            <person name="Nelson K.E."/>
            <person name="Fouts D.E."/>
            <person name="Mongodin E.F."/>
            <person name="Ravel J."/>
            <person name="DeBoy R.T."/>
            <person name="Kolonay J.F."/>
            <person name="Rasko D.A."/>
            <person name="Angiuoli S.V."/>
            <person name="Gill S.R."/>
            <person name="Paulsen I.T."/>
            <person name="Peterson J.D."/>
            <person name="White O."/>
            <person name="Nelson W.C."/>
            <person name="Nierman W.C."/>
            <person name="Beanan M.J."/>
            <person name="Brinkac L.M."/>
            <person name="Daugherty S.C."/>
            <person name="Dodson R.J."/>
            <person name="Durkin A.S."/>
            <person name="Madupu R."/>
            <person name="Haft D.H."/>
            <person name="Selengut J."/>
            <person name="Van Aken S.E."/>
            <person name="Khouri H.M."/>
            <person name="Fedorova N."/>
            <person name="Forberger H.A."/>
            <person name="Tran B."/>
            <person name="Kathariou S."/>
            <person name="Wonderling L.D."/>
            <person name="Uhlich G.A."/>
            <person name="Bayles D.O."/>
            <person name="Luchansky J.B."/>
            <person name="Fraser C.M."/>
        </authorList>
    </citation>
    <scope>NUCLEOTIDE SEQUENCE [LARGE SCALE GENOMIC DNA]</scope>
    <source>
        <strain>F2365</strain>
    </source>
</reference>
<gene>
    <name evidence="1" type="primary">recX</name>
    <name type="ordered locus">LMOf2365_1717</name>
</gene>
<keyword id="KW-0963">Cytoplasm</keyword>
<protein>
    <recommendedName>
        <fullName evidence="1">Regulatory protein RecX</fullName>
    </recommendedName>
</protein>
<proteinExistence type="inferred from homology"/>
<accession>Q71YX4</accession>